<comment type="similarity">
    <text evidence="1">Belongs to the NifX/NifY family.</text>
</comment>
<evidence type="ECO:0000305" key="1"/>
<organism>
    <name type="scientific">Azotobacter vinelandii</name>
    <dbReference type="NCBI Taxonomy" id="354"/>
    <lineage>
        <taxon>Bacteria</taxon>
        <taxon>Pseudomonadati</taxon>
        <taxon>Pseudomonadota</taxon>
        <taxon>Gammaproteobacteria</taxon>
        <taxon>Pseudomonadales</taxon>
        <taxon>Pseudomonadaceae</taxon>
        <taxon>Azotobacter</taxon>
    </lineage>
</organism>
<gene>
    <name type="primary">nifY</name>
</gene>
<accession>P14886</accession>
<name>NIFY_AZOVI</name>
<keyword id="KW-0535">Nitrogen fixation</keyword>
<proteinExistence type="inferred from homology"/>
<sequence>MTAQPPFGQAPLPAHLALRIALAARSLKGVDTAHLLRALIAAVGEPITEARLRKLRASRLRTRLLETCGEGVQSTLTDRQLHSALGLLKGRGVRMPEDPLPIPEPYRNGEFQDSVRIACASDNGERLDGIFSNCTRFLIYQISPRESRLIDLREPGPCREDEDRHARRAELLADCQLLYTLSIGGPAAAKVVRAGVHPVRLARARPAREIVEELQRVLATAPPPWLAKAMGAEPDQRIRFTQ</sequence>
<dbReference type="EMBL" id="M20568">
    <property type="protein sequence ID" value="AAA64713.1"/>
    <property type="molecule type" value="Genomic_DNA"/>
</dbReference>
<dbReference type="PIR" id="B32055">
    <property type="entry name" value="B32055"/>
</dbReference>
<dbReference type="RefSeq" id="WP_012698835.1">
    <property type="nucleotide sequence ID" value="NZ_FPKM01000020.1"/>
</dbReference>
<dbReference type="SMR" id="P14886"/>
<dbReference type="OMA" id="FFIYAFD"/>
<dbReference type="GO" id="GO:0009399">
    <property type="term" value="P:nitrogen fixation"/>
    <property type="evidence" value="ECO:0007669"/>
    <property type="project" value="UniProtKB-KW"/>
</dbReference>
<dbReference type="CDD" id="cd00853">
    <property type="entry name" value="NifX"/>
    <property type="match status" value="1"/>
</dbReference>
<dbReference type="Gene3D" id="3.30.420.130">
    <property type="entry name" value="Dinitrogenase iron-molybdenum cofactor biosynthesis domain"/>
    <property type="match status" value="1"/>
</dbReference>
<dbReference type="Gene3D" id="1.10.150.590">
    <property type="entry name" value="Dinitrogenase iron-molybdenum cofactor, N-terminal"/>
    <property type="match status" value="1"/>
</dbReference>
<dbReference type="InterPro" id="IPR003731">
    <property type="entry name" value="Di-Nase_FeMo-co_biosynth"/>
</dbReference>
<dbReference type="InterPro" id="IPR036105">
    <property type="entry name" value="DiNase_FeMo-co_biosyn_sf"/>
</dbReference>
<dbReference type="InterPro" id="IPR031763">
    <property type="entry name" value="NafY_N"/>
</dbReference>
<dbReference type="InterPro" id="IPR038127">
    <property type="entry name" value="NafY_N_sf"/>
</dbReference>
<dbReference type="InterPro" id="IPR034169">
    <property type="entry name" value="NifX-like"/>
</dbReference>
<dbReference type="InterPro" id="IPR051840">
    <property type="entry name" value="NifX/NifY_domain"/>
</dbReference>
<dbReference type="PANTHER" id="PTHR33937:SF1">
    <property type="entry name" value="IRON-MOLIBDENUM COFACTOR PROCESSING PROTEIN"/>
    <property type="match status" value="1"/>
</dbReference>
<dbReference type="PANTHER" id="PTHR33937">
    <property type="entry name" value="IRON-MOLYBDENUM PROTEIN-RELATED-RELATED"/>
    <property type="match status" value="1"/>
</dbReference>
<dbReference type="Pfam" id="PF16844">
    <property type="entry name" value="DIMCO_N"/>
    <property type="match status" value="1"/>
</dbReference>
<dbReference type="Pfam" id="PF02579">
    <property type="entry name" value="Nitro_FeMo-Co"/>
    <property type="match status" value="1"/>
</dbReference>
<dbReference type="SUPFAM" id="SSF53146">
    <property type="entry name" value="Nitrogenase accessory factor-like"/>
    <property type="match status" value="1"/>
</dbReference>
<reference key="1">
    <citation type="journal article" date="1989" name="J. Bacteriol.">
        <title>Physical and genetic map of the major nif gene cluster from Azotobacter vinelandii.</title>
        <authorList>
            <person name="Jacobson M.R."/>
            <person name="Brigle K.E."/>
            <person name="Bennett L.T."/>
            <person name="Setterquist R.A."/>
            <person name="Wilson M.S."/>
            <person name="Cash V.L."/>
            <person name="Beynon J."/>
            <person name="Newton W.E."/>
            <person name="Dean D.R."/>
        </authorList>
    </citation>
    <scope>NUCLEOTIDE SEQUENCE [GENOMIC DNA]</scope>
    <source>
        <strain>ATCC 13705 / OP1 / DSM 366 / NCIMB 11614 / LMG 3878 / UW</strain>
    </source>
</reference>
<feature type="chain" id="PRO_0000096834" description="Protein NifY">
    <location>
        <begin position="1"/>
        <end position="242"/>
    </location>
</feature>
<protein>
    <recommendedName>
        <fullName>Protein NifY</fullName>
    </recommendedName>
</protein>